<protein>
    <recommendedName>
        <fullName evidence="1">Thymidine phosphorylase</fullName>
        <ecNumber evidence="1">2.4.2.4</ecNumber>
    </recommendedName>
    <alternativeName>
        <fullName evidence="1">TdRPase</fullName>
    </alternativeName>
</protein>
<feature type="chain" id="PRO_0000059071" description="Thymidine phosphorylase">
    <location>
        <begin position="1"/>
        <end position="443"/>
    </location>
</feature>
<keyword id="KW-0328">Glycosyltransferase</keyword>
<keyword id="KW-1185">Reference proteome</keyword>
<keyword id="KW-0808">Transferase</keyword>
<sequence length="443" mass="47444">MYLPQEIIRKKRDNKELTAEEINFFIQGVAKETVSEGQIAAFAMAVYFNEMTMPERIALTCAMRDSGMVIDWSHMNFDGPIVDKHSTGGVGDVTSLMLGPMVAACGGYVPMISGRGLGHTGGTLDKLESIAGYNITPSNDVFGKVTKEAGVAIIGQTGDLAPADKRVYATRDVTATVDNISLITASILSKKLAAGLDSLVMDVKVGSGAFMPTYEASEELAKSIVAVANGAGTKTTALLTDMNQVLASTAGNALEVREAIRFLTGEYRNPRLYEVTMALCAEMLVIANLAKDEQDARAKLQTVLDNGKAAECFGKMVFGLGGPSDIIENYDNHLESAQIIKPVFADTTGFVQAMDTRDLGMAVVGMGGGRRVASDTIDYAVGLSDMIRLGQTADNQQPLAMIHARNEEQWQQAANAVKAAIVISEKQPEATPEVYRKIRPEDV</sequence>
<evidence type="ECO:0000255" key="1">
    <source>
        <dbReference type="HAMAP-Rule" id="MF_01628"/>
    </source>
</evidence>
<reference key="1">
    <citation type="journal article" date="2005" name="Proc. Natl. Acad. Sci. U.S.A.">
        <title>Complete genome sequence of Vibrio fischeri: a symbiotic bacterium with pathogenic congeners.</title>
        <authorList>
            <person name="Ruby E.G."/>
            <person name="Urbanowski M."/>
            <person name="Campbell J."/>
            <person name="Dunn A."/>
            <person name="Faini M."/>
            <person name="Gunsalus R."/>
            <person name="Lostroh P."/>
            <person name="Lupp C."/>
            <person name="McCann J."/>
            <person name="Millikan D."/>
            <person name="Schaefer A."/>
            <person name="Stabb E."/>
            <person name="Stevens A."/>
            <person name="Visick K."/>
            <person name="Whistler C."/>
            <person name="Greenberg E.P."/>
        </authorList>
    </citation>
    <scope>NUCLEOTIDE SEQUENCE [LARGE SCALE GENOMIC DNA]</scope>
    <source>
        <strain>ATCC 700601 / ES114</strain>
    </source>
</reference>
<dbReference type="EC" id="2.4.2.4" evidence="1"/>
<dbReference type="EMBL" id="CP000020">
    <property type="protein sequence ID" value="AAW85000.1"/>
    <property type="molecule type" value="Genomic_DNA"/>
</dbReference>
<dbReference type="RefSeq" id="WP_011261273.1">
    <property type="nucleotide sequence ID" value="NC_006840.2"/>
</dbReference>
<dbReference type="RefSeq" id="YP_203888.1">
    <property type="nucleotide sequence ID" value="NC_006840.2"/>
</dbReference>
<dbReference type="SMR" id="Q5E7J6"/>
<dbReference type="STRING" id="312309.VF_0505"/>
<dbReference type="EnsemblBacteria" id="AAW85000">
    <property type="protein sequence ID" value="AAW85000"/>
    <property type="gene ID" value="VF_0505"/>
</dbReference>
<dbReference type="GeneID" id="54163142"/>
<dbReference type="KEGG" id="vfi:VF_0505"/>
<dbReference type="PATRIC" id="fig|312309.11.peg.496"/>
<dbReference type="eggNOG" id="COG0213">
    <property type="taxonomic scope" value="Bacteria"/>
</dbReference>
<dbReference type="HOGENOM" id="CLU_025040_0_1_6"/>
<dbReference type="OrthoDB" id="9763887at2"/>
<dbReference type="UniPathway" id="UPA00578">
    <property type="reaction ID" value="UER00638"/>
</dbReference>
<dbReference type="Proteomes" id="UP000000537">
    <property type="component" value="Chromosome I"/>
</dbReference>
<dbReference type="GO" id="GO:0005829">
    <property type="term" value="C:cytosol"/>
    <property type="evidence" value="ECO:0007669"/>
    <property type="project" value="TreeGrafter"/>
</dbReference>
<dbReference type="GO" id="GO:0004645">
    <property type="term" value="F:1,4-alpha-oligoglucan phosphorylase activity"/>
    <property type="evidence" value="ECO:0007669"/>
    <property type="project" value="InterPro"/>
</dbReference>
<dbReference type="GO" id="GO:0009032">
    <property type="term" value="F:thymidine phosphorylase activity"/>
    <property type="evidence" value="ECO:0007669"/>
    <property type="project" value="UniProtKB-UniRule"/>
</dbReference>
<dbReference type="GO" id="GO:0006206">
    <property type="term" value="P:pyrimidine nucleobase metabolic process"/>
    <property type="evidence" value="ECO:0007669"/>
    <property type="project" value="InterPro"/>
</dbReference>
<dbReference type="GO" id="GO:0046104">
    <property type="term" value="P:thymidine metabolic process"/>
    <property type="evidence" value="ECO:0007669"/>
    <property type="project" value="UniProtKB-UniRule"/>
</dbReference>
<dbReference type="FunFam" id="3.40.1030.10:FF:000001">
    <property type="entry name" value="Thymidine phosphorylase"/>
    <property type="match status" value="1"/>
</dbReference>
<dbReference type="FunFam" id="3.90.1170.30:FF:000001">
    <property type="entry name" value="Thymidine phosphorylase"/>
    <property type="match status" value="1"/>
</dbReference>
<dbReference type="Gene3D" id="3.40.1030.10">
    <property type="entry name" value="Nucleoside phosphorylase/phosphoribosyltransferase catalytic domain"/>
    <property type="match status" value="1"/>
</dbReference>
<dbReference type="Gene3D" id="3.90.1170.30">
    <property type="entry name" value="Pyrimidine nucleoside phosphorylase-like, C-terminal domain"/>
    <property type="match status" value="1"/>
</dbReference>
<dbReference type="Gene3D" id="1.20.970.10">
    <property type="entry name" value="Transferase, Pyrimidine Nucleoside Phosphorylase, Chain C"/>
    <property type="match status" value="1"/>
</dbReference>
<dbReference type="HAMAP" id="MF_01628">
    <property type="entry name" value="Thymid_phosp"/>
    <property type="match status" value="1"/>
</dbReference>
<dbReference type="InterPro" id="IPR000312">
    <property type="entry name" value="Glycosyl_Trfase_fam3"/>
</dbReference>
<dbReference type="InterPro" id="IPR017459">
    <property type="entry name" value="Glycosyl_Trfase_fam3_N_dom"/>
</dbReference>
<dbReference type="InterPro" id="IPR036320">
    <property type="entry name" value="Glycosyl_Trfase_fam3_N_dom_sf"/>
</dbReference>
<dbReference type="InterPro" id="IPR035902">
    <property type="entry name" value="Nuc_phospho_transferase"/>
</dbReference>
<dbReference type="InterPro" id="IPR036566">
    <property type="entry name" value="PYNP-like_C_sf"/>
</dbReference>
<dbReference type="InterPro" id="IPR013102">
    <property type="entry name" value="PYNP_C"/>
</dbReference>
<dbReference type="InterPro" id="IPR018090">
    <property type="entry name" value="Pyrmidine_PPas_bac/euk"/>
</dbReference>
<dbReference type="InterPro" id="IPR017872">
    <property type="entry name" value="Pyrmidine_PPase_CS"/>
</dbReference>
<dbReference type="InterPro" id="IPR000053">
    <property type="entry name" value="Thymidine/pyrmidine_PPase"/>
</dbReference>
<dbReference type="InterPro" id="IPR013465">
    <property type="entry name" value="Thymidine_Pase"/>
</dbReference>
<dbReference type="NCBIfam" id="NF004490">
    <property type="entry name" value="PRK05820.1"/>
    <property type="match status" value="1"/>
</dbReference>
<dbReference type="NCBIfam" id="TIGR02643">
    <property type="entry name" value="T_phosphoryl"/>
    <property type="match status" value="1"/>
</dbReference>
<dbReference type="NCBIfam" id="TIGR02644">
    <property type="entry name" value="Y_phosphoryl"/>
    <property type="match status" value="1"/>
</dbReference>
<dbReference type="PANTHER" id="PTHR10515">
    <property type="entry name" value="THYMIDINE PHOSPHORYLASE"/>
    <property type="match status" value="1"/>
</dbReference>
<dbReference type="PANTHER" id="PTHR10515:SF0">
    <property type="entry name" value="THYMIDINE PHOSPHORYLASE"/>
    <property type="match status" value="1"/>
</dbReference>
<dbReference type="Pfam" id="PF02885">
    <property type="entry name" value="Glycos_trans_3N"/>
    <property type="match status" value="1"/>
</dbReference>
<dbReference type="Pfam" id="PF00591">
    <property type="entry name" value="Glycos_transf_3"/>
    <property type="match status" value="1"/>
</dbReference>
<dbReference type="Pfam" id="PF07831">
    <property type="entry name" value="PYNP_C"/>
    <property type="match status" value="1"/>
</dbReference>
<dbReference type="PIRSF" id="PIRSF000478">
    <property type="entry name" value="TP_PyNP"/>
    <property type="match status" value="1"/>
</dbReference>
<dbReference type="SMART" id="SM00941">
    <property type="entry name" value="PYNP_C"/>
    <property type="match status" value="1"/>
</dbReference>
<dbReference type="SUPFAM" id="SSF52418">
    <property type="entry name" value="Nucleoside phosphorylase/phosphoribosyltransferase catalytic domain"/>
    <property type="match status" value="1"/>
</dbReference>
<dbReference type="SUPFAM" id="SSF47648">
    <property type="entry name" value="Nucleoside phosphorylase/phosphoribosyltransferase N-terminal domain"/>
    <property type="match status" value="1"/>
</dbReference>
<dbReference type="SUPFAM" id="SSF54680">
    <property type="entry name" value="Pyrimidine nucleoside phosphorylase C-terminal domain"/>
    <property type="match status" value="1"/>
</dbReference>
<dbReference type="PROSITE" id="PS00647">
    <property type="entry name" value="THYMID_PHOSPHORYLASE"/>
    <property type="match status" value="1"/>
</dbReference>
<name>TYPH_ALIF1</name>
<proteinExistence type="inferred from homology"/>
<comment type="function">
    <text evidence="1">The enzymes which catalyze the reversible phosphorolysis of pyrimidine nucleosides are involved in the degradation of these compounds and in their utilization as carbon and energy sources, or in the rescue of pyrimidine bases for nucleotide synthesis.</text>
</comment>
<comment type="catalytic activity">
    <reaction evidence="1">
        <text>thymidine + phosphate = 2-deoxy-alpha-D-ribose 1-phosphate + thymine</text>
        <dbReference type="Rhea" id="RHEA:16037"/>
        <dbReference type="ChEBI" id="CHEBI:17748"/>
        <dbReference type="ChEBI" id="CHEBI:17821"/>
        <dbReference type="ChEBI" id="CHEBI:43474"/>
        <dbReference type="ChEBI" id="CHEBI:57259"/>
        <dbReference type="EC" id="2.4.2.4"/>
    </reaction>
</comment>
<comment type="pathway">
    <text evidence="1">Pyrimidine metabolism; dTMP biosynthesis via salvage pathway; dTMP from thymine: step 1/2.</text>
</comment>
<comment type="subunit">
    <text evidence="1">Homodimer.</text>
</comment>
<comment type="similarity">
    <text evidence="1">Belongs to the thymidine/pyrimidine-nucleoside phosphorylase family.</text>
</comment>
<gene>
    <name evidence="1" type="primary">deoA</name>
    <name type="ordered locus">VF_0505</name>
</gene>
<accession>Q5E7J6</accession>
<organism>
    <name type="scientific">Aliivibrio fischeri (strain ATCC 700601 / ES114)</name>
    <name type="common">Vibrio fischeri</name>
    <dbReference type="NCBI Taxonomy" id="312309"/>
    <lineage>
        <taxon>Bacteria</taxon>
        <taxon>Pseudomonadati</taxon>
        <taxon>Pseudomonadota</taxon>
        <taxon>Gammaproteobacteria</taxon>
        <taxon>Vibrionales</taxon>
        <taxon>Vibrionaceae</taxon>
        <taxon>Aliivibrio</taxon>
    </lineage>
</organism>